<evidence type="ECO:0000255" key="1">
    <source>
        <dbReference type="HAMAP-Rule" id="MF_00127"/>
    </source>
</evidence>
<protein>
    <recommendedName>
        <fullName evidence="1">Histidine--tRNA ligase</fullName>
        <ecNumber evidence="1">6.1.1.21</ecNumber>
    </recommendedName>
    <alternativeName>
        <fullName evidence="1">Histidyl-tRNA synthetase</fullName>
        <shortName evidence="1">HisRS</shortName>
    </alternativeName>
</protein>
<proteinExistence type="inferred from homology"/>
<sequence>MAKNIQAIRGMNDYLPGETAIWQRIEGTLKNVLGSYGYSEIRLPIVEQTPLFKRAIGEVTDVVEKEMYTFEDRNGDSLTLRPEGTAGCVRAGIEHGLLYNQEQRLWYIGPMFRHERPQKGRYRQFHQLGCEVFGLQGPDIDAELIMLTARWWRALGISEHVTLELNSIGSLEARANYRDALVAFLEQHKEKLDEDCKRRMYTNPLRVLDSKNPEVQALLNDAPALGDYLDEESREHFAGLCKLLESAGIAYTVNQRLVRGLDYYNRTVFEWVTNSLGSQGTVCAGGRYDGLVEQLGGRATPAVGFAMGLERLVLLVQAVNPEFKADPVVDIYLVASGADTQSAAMALAERLRDELPGVKLMTNHGGGNFKKQFARADKWGARVAVVLGESEVANGTAVVKDLRSGEQTAVAQDSVAAHLRTLLG</sequence>
<comment type="catalytic activity">
    <reaction evidence="1">
        <text>tRNA(His) + L-histidine + ATP = L-histidyl-tRNA(His) + AMP + diphosphate + H(+)</text>
        <dbReference type="Rhea" id="RHEA:17313"/>
        <dbReference type="Rhea" id="RHEA-COMP:9665"/>
        <dbReference type="Rhea" id="RHEA-COMP:9689"/>
        <dbReference type="ChEBI" id="CHEBI:15378"/>
        <dbReference type="ChEBI" id="CHEBI:30616"/>
        <dbReference type="ChEBI" id="CHEBI:33019"/>
        <dbReference type="ChEBI" id="CHEBI:57595"/>
        <dbReference type="ChEBI" id="CHEBI:78442"/>
        <dbReference type="ChEBI" id="CHEBI:78527"/>
        <dbReference type="ChEBI" id="CHEBI:456215"/>
        <dbReference type="EC" id="6.1.1.21"/>
    </reaction>
</comment>
<comment type="subunit">
    <text evidence="1">Homodimer.</text>
</comment>
<comment type="subcellular location">
    <subcellularLocation>
        <location evidence="1">Cytoplasm</location>
    </subcellularLocation>
</comment>
<comment type="similarity">
    <text evidence="1">Belongs to the class-II aminoacyl-tRNA synthetase family.</text>
</comment>
<feature type="chain" id="PRO_1000199136" description="Histidine--tRNA ligase">
    <location>
        <begin position="1"/>
        <end position="424"/>
    </location>
</feature>
<dbReference type="EC" id="6.1.1.21" evidence="1"/>
<dbReference type="EMBL" id="CU928162">
    <property type="protein sequence ID" value="CAR09115.2"/>
    <property type="molecule type" value="Genomic_DNA"/>
</dbReference>
<dbReference type="RefSeq" id="WP_001107167.1">
    <property type="nucleotide sequence ID" value="NC_011745.1"/>
</dbReference>
<dbReference type="SMR" id="B7MYE9"/>
<dbReference type="GeneID" id="75206207"/>
<dbReference type="KEGG" id="ecq:ECED1_2945"/>
<dbReference type="HOGENOM" id="CLU_025113_1_1_6"/>
<dbReference type="Proteomes" id="UP000000748">
    <property type="component" value="Chromosome"/>
</dbReference>
<dbReference type="GO" id="GO:0005737">
    <property type="term" value="C:cytoplasm"/>
    <property type="evidence" value="ECO:0007669"/>
    <property type="project" value="UniProtKB-SubCell"/>
</dbReference>
<dbReference type="GO" id="GO:0005524">
    <property type="term" value="F:ATP binding"/>
    <property type="evidence" value="ECO:0007669"/>
    <property type="project" value="UniProtKB-UniRule"/>
</dbReference>
<dbReference type="GO" id="GO:0004821">
    <property type="term" value="F:histidine-tRNA ligase activity"/>
    <property type="evidence" value="ECO:0007669"/>
    <property type="project" value="UniProtKB-UniRule"/>
</dbReference>
<dbReference type="GO" id="GO:0006427">
    <property type="term" value="P:histidyl-tRNA aminoacylation"/>
    <property type="evidence" value="ECO:0007669"/>
    <property type="project" value="UniProtKB-UniRule"/>
</dbReference>
<dbReference type="CDD" id="cd00773">
    <property type="entry name" value="HisRS-like_core"/>
    <property type="match status" value="1"/>
</dbReference>
<dbReference type="CDD" id="cd00859">
    <property type="entry name" value="HisRS_anticodon"/>
    <property type="match status" value="1"/>
</dbReference>
<dbReference type="FunFam" id="3.30.930.10:FF:000005">
    <property type="entry name" value="Histidine--tRNA ligase"/>
    <property type="match status" value="1"/>
</dbReference>
<dbReference type="FunFam" id="3.40.50.800:FF:000007">
    <property type="entry name" value="Histidine--tRNA ligase"/>
    <property type="match status" value="1"/>
</dbReference>
<dbReference type="Gene3D" id="3.40.50.800">
    <property type="entry name" value="Anticodon-binding domain"/>
    <property type="match status" value="1"/>
</dbReference>
<dbReference type="Gene3D" id="3.30.930.10">
    <property type="entry name" value="Bira Bifunctional Protein, Domain 2"/>
    <property type="match status" value="1"/>
</dbReference>
<dbReference type="HAMAP" id="MF_00127">
    <property type="entry name" value="His_tRNA_synth"/>
    <property type="match status" value="1"/>
</dbReference>
<dbReference type="InterPro" id="IPR006195">
    <property type="entry name" value="aa-tRNA-synth_II"/>
</dbReference>
<dbReference type="InterPro" id="IPR045864">
    <property type="entry name" value="aa-tRNA-synth_II/BPL/LPL"/>
</dbReference>
<dbReference type="InterPro" id="IPR004154">
    <property type="entry name" value="Anticodon-bd"/>
</dbReference>
<dbReference type="InterPro" id="IPR036621">
    <property type="entry name" value="Anticodon-bd_dom_sf"/>
</dbReference>
<dbReference type="InterPro" id="IPR015807">
    <property type="entry name" value="His-tRNA-ligase"/>
</dbReference>
<dbReference type="InterPro" id="IPR041715">
    <property type="entry name" value="HisRS-like_core"/>
</dbReference>
<dbReference type="InterPro" id="IPR004516">
    <property type="entry name" value="HisRS/HisZ"/>
</dbReference>
<dbReference type="InterPro" id="IPR033656">
    <property type="entry name" value="HisRS_anticodon"/>
</dbReference>
<dbReference type="NCBIfam" id="TIGR00442">
    <property type="entry name" value="hisS"/>
    <property type="match status" value="1"/>
</dbReference>
<dbReference type="PANTHER" id="PTHR43707:SF1">
    <property type="entry name" value="HISTIDINE--TRNA LIGASE, MITOCHONDRIAL-RELATED"/>
    <property type="match status" value="1"/>
</dbReference>
<dbReference type="PANTHER" id="PTHR43707">
    <property type="entry name" value="HISTIDYL-TRNA SYNTHETASE"/>
    <property type="match status" value="1"/>
</dbReference>
<dbReference type="Pfam" id="PF03129">
    <property type="entry name" value="HGTP_anticodon"/>
    <property type="match status" value="1"/>
</dbReference>
<dbReference type="Pfam" id="PF13393">
    <property type="entry name" value="tRNA-synt_His"/>
    <property type="match status" value="1"/>
</dbReference>
<dbReference type="PIRSF" id="PIRSF001549">
    <property type="entry name" value="His-tRNA_synth"/>
    <property type="match status" value="1"/>
</dbReference>
<dbReference type="SUPFAM" id="SSF52954">
    <property type="entry name" value="Class II aaRS ABD-related"/>
    <property type="match status" value="1"/>
</dbReference>
<dbReference type="SUPFAM" id="SSF55681">
    <property type="entry name" value="Class II aaRS and biotin synthetases"/>
    <property type="match status" value="1"/>
</dbReference>
<dbReference type="PROSITE" id="PS50862">
    <property type="entry name" value="AA_TRNA_LIGASE_II"/>
    <property type="match status" value="1"/>
</dbReference>
<accession>B7MYE9</accession>
<name>SYH_ECO81</name>
<reference key="1">
    <citation type="journal article" date="2009" name="PLoS Genet.">
        <title>Organised genome dynamics in the Escherichia coli species results in highly diverse adaptive paths.</title>
        <authorList>
            <person name="Touchon M."/>
            <person name="Hoede C."/>
            <person name="Tenaillon O."/>
            <person name="Barbe V."/>
            <person name="Baeriswyl S."/>
            <person name="Bidet P."/>
            <person name="Bingen E."/>
            <person name="Bonacorsi S."/>
            <person name="Bouchier C."/>
            <person name="Bouvet O."/>
            <person name="Calteau A."/>
            <person name="Chiapello H."/>
            <person name="Clermont O."/>
            <person name="Cruveiller S."/>
            <person name="Danchin A."/>
            <person name="Diard M."/>
            <person name="Dossat C."/>
            <person name="Karoui M.E."/>
            <person name="Frapy E."/>
            <person name="Garry L."/>
            <person name="Ghigo J.M."/>
            <person name="Gilles A.M."/>
            <person name="Johnson J."/>
            <person name="Le Bouguenec C."/>
            <person name="Lescat M."/>
            <person name="Mangenot S."/>
            <person name="Martinez-Jehanne V."/>
            <person name="Matic I."/>
            <person name="Nassif X."/>
            <person name="Oztas S."/>
            <person name="Petit M.A."/>
            <person name="Pichon C."/>
            <person name="Rouy Z."/>
            <person name="Ruf C.S."/>
            <person name="Schneider D."/>
            <person name="Tourret J."/>
            <person name="Vacherie B."/>
            <person name="Vallenet D."/>
            <person name="Medigue C."/>
            <person name="Rocha E.P.C."/>
            <person name="Denamur E."/>
        </authorList>
    </citation>
    <scope>NUCLEOTIDE SEQUENCE [LARGE SCALE GENOMIC DNA]</scope>
    <source>
        <strain>ED1a</strain>
    </source>
</reference>
<organism>
    <name type="scientific">Escherichia coli O81 (strain ED1a)</name>
    <dbReference type="NCBI Taxonomy" id="585397"/>
    <lineage>
        <taxon>Bacteria</taxon>
        <taxon>Pseudomonadati</taxon>
        <taxon>Pseudomonadota</taxon>
        <taxon>Gammaproteobacteria</taxon>
        <taxon>Enterobacterales</taxon>
        <taxon>Enterobacteriaceae</taxon>
        <taxon>Escherichia</taxon>
    </lineage>
</organism>
<gene>
    <name evidence="1" type="primary">hisS</name>
    <name type="ordered locus">ECED1_2945</name>
</gene>
<keyword id="KW-0030">Aminoacyl-tRNA synthetase</keyword>
<keyword id="KW-0067">ATP-binding</keyword>
<keyword id="KW-0963">Cytoplasm</keyword>
<keyword id="KW-0436">Ligase</keyword>
<keyword id="KW-0547">Nucleotide-binding</keyword>
<keyword id="KW-0648">Protein biosynthesis</keyword>